<evidence type="ECO:0000269" key="1">
    <source>
    </source>
</evidence>
<evidence type="ECO:0000269" key="2">
    <source>
    </source>
</evidence>
<evidence type="ECO:0000269" key="3">
    <source>
    </source>
</evidence>
<evidence type="ECO:0000269" key="4">
    <source>
    </source>
</evidence>
<evidence type="ECO:0000303" key="5">
    <source>
    </source>
</evidence>
<evidence type="ECO:0000305" key="6"/>
<evidence type="ECO:0000305" key="7">
    <source>
    </source>
</evidence>
<proteinExistence type="evidence at protein level"/>
<accession>Q9T1W1</accession>
<organism>
    <name type="scientific">Escherichia phage Mu</name>
    <name type="common">Bacteriophage Mu</name>
    <dbReference type="NCBI Taxonomy" id="2681603"/>
    <lineage>
        <taxon>Viruses</taxon>
        <taxon>Duplodnaviria</taxon>
        <taxon>Heunggongvirae</taxon>
        <taxon>Uroviricota</taxon>
        <taxon>Caudoviricetes</taxon>
        <taxon>Muvirus</taxon>
        <taxon>Muvirus mu</taxon>
    </lineage>
</organism>
<dbReference type="EMBL" id="AF083977">
    <property type="protein sequence ID" value="AAF01112.1"/>
    <property type="molecule type" value="Genomic_DNA"/>
</dbReference>
<dbReference type="RefSeq" id="NP_050638.1">
    <property type="nucleotide sequence ID" value="NC_000929.1"/>
</dbReference>
<dbReference type="PDB" id="9JOD">
    <property type="method" value="EM"/>
    <property type="resolution" value="3.20 A"/>
    <property type="chains" value="A/B/C/D/E/F/G=1-305"/>
</dbReference>
<dbReference type="PDBsum" id="9JOD"/>
<dbReference type="EMDB" id="EMD-61659"/>
<dbReference type="SMR" id="Q9T1W1"/>
<dbReference type="GeneID" id="2636267"/>
<dbReference type="KEGG" id="vg:2636267"/>
<dbReference type="Proteomes" id="UP000002611">
    <property type="component" value="Genome"/>
</dbReference>
<dbReference type="GO" id="GO:0030430">
    <property type="term" value="C:host cell cytoplasm"/>
    <property type="evidence" value="ECO:0007669"/>
    <property type="project" value="UniProtKB-SubCell"/>
</dbReference>
<dbReference type="GO" id="GO:0098017">
    <property type="term" value="C:viral capsid, major subunit"/>
    <property type="evidence" value="ECO:0000315"/>
    <property type="project" value="CACAO"/>
</dbReference>
<dbReference type="InterPro" id="IPR018774">
    <property type="entry name" value="Phage_Mu_GpT"/>
</dbReference>
<dbReference type="Pfam" id="PF10124">
    <property type="entry name" value="Mu-like_gpT"/>
    <property type="match status" value="1"/>
</dbReference>
<reference key="1">
    <citation type="journal article" date="2002" name="J. Mol. Biol.">
        <title>Bacteriophage Mu genome sequence: analysis and comparison with Mu-like prophages in Haemophilus, Neisseria and Deinococcus.</title>
        <authorList>
            <person name="Morgan G.J."/>
            <person name="Hatfull G.F."/>
            <person name="Casjens S."/>
            <person name="Hendrix R.W."/>
        </authorList>
    </citation>
    <scope>NUCLEOTIDE SEQUENCE [LARGE SCALE GENOMIC DNA]</scope>
    <scope>PROTEIN SEQUENCE OF 1-8</scope>
    <scope>FUNCTION</scope>
</reference>
<reference key="2">
    <citation type="journal article" date="1993" name="Genetics">
        <title>Mutational analysis of a C-dependent late promoter of bacteriophage Mu.</title>
        <authorList>
            <person name="Chiang L.W."/>
            <person name="Howe M.M."/>
        </authorList>
    </citation>
    <scope>INDUCTION</scope>
</reference>
<reference key="3">
    <citation type="journal article" date="1996" name="Virology">
        <title>Bacteriophage Mu head assembly.</title>
        <authorList>
            <person name="Grimaud R."/>
        </authorList>
    </citation>
    <scope>FUNCTION</scope>
    <scope>SUBUNIT</scope>
    <scope>SUBCELLULAR LOCATION</scope>
</reference>
<reference key="4">
    <citation type="journal article" date="1998" name="J. Bacteriol.">
        <title>Assembly of both the head and tail of bacteriophage Mu is blocked in Escherichia coli groEL and groES mutants.</title>
        <authorList>
            <person name="Grimaud R."/>
            <person name="Toussaint A."/>
        </authorList>
    </citation>
    <scope>FUNCTION</scope>
</reference>
<protein>
    <recommendedName>
        <fullName evidence="5">Major capsid protein</fullName>
    </recommendedName>
    <alternativeName>
        <fullName>Gene product 34</fullName>
        <shortName>gp34</shortName>
    </alternativeName>
    <alternativeName>
        <fullName>Gene product T</fullName>
        <shortName>gpT</shortName>
    </alternativeName>
    <alternativeName>
        <fullName evidence="6">Major head protein</fullName>
    </alternativeName>
</protein>
<name>CAPSD_BPMU</name>
<gene>
    <name type="primary">T</name>
    <name type="ordered locus">Mup34</name>
</gene>
<keyword id="KW-0002">3D-structure</keyword>
<keyword id="KW-0167">Capsid protein</keyword>
<keyword id="KW-0903">Direct protein sequencing</keyword>
<keyword id="KW-1035">Host cytoplasm</keyword>
<keyword id="KW-0426">Late protein</keyword>
<keyword id="KW-1185">Reference proteome</keyword>
<keyword id="KW-0118">Viral capsid assembly</keyword>
<keyword id="KW-1188">Viral release from host cell</keyword>
<keyword id="KW-0946">Virion</keyword>
<comment type="function">
    <text evidence="1 3 4">Capsid protein that self-assembles to form an icosahedral capsid, about 54 nm in diameter.</text>
</comment>
<comment type="subunit">
    <text evidence="3 6">Part of the immature prohead complex. Interaction between the viral portal protein and the viral protease I may give rise to an early 25S initiator complex. The scaffolding protein Z and the capsid protein T should then be added to the initiator complex to yield immature procapsid (Probable). Host GroEL and GroES are also essential for the correct assembly of viral capsids.</text>
</comment>
<comment type="subcellular location">
    <subcellularLocation>
        <location evidence="3">Virion</location>
    </subcellularLocation>
    <subcellularLocation>
        <location evidence="7">Host cytoplasm</location>
    </subcellularLocation>
    <text>Capsid.</text>
</comment>
<comment type="induction">
    <text evidence="2">Expressed in the late phase of the viral replicative cycle. Expression of late genes is activated by the viral late transcription activator C.</text>
</comment>
<sequence>MIVTPASIKALMTSWRKDFQGGLEDAPSQYNKIAMVVNSSTRSNTYGWLGKFPTLKEWVGKRTIQQMEAHGYSIANKTFEGTVGISRDDFEDDNLGIYAPIFQEMGRSAAVQPDELIFKLLKDGFTQPCYDGQNFFDKEHPVYPNVDGTGSAVNTSNIVEQDSFSGLPFYLLDCSRAVKPLIFQERRKPELVARTRIDDDHVFMDNEFLFGASTRRAAGYGFWQMAVAVKGDLTLDNLWKGWQLMRSFEGDGGKKLGLKPTHIVVPVGLEKAAEQLLNRELFADGNTTVSNEMKGKLQLVVADYL</sequence>
<organismHost>
    <name type="scientific">Enterobacteriaceae</name>
    <dbReference type="NCBI Taxonomy" id="543"/>
</organismHost>
<feature type="chain" id="PRO_0000077695" description="Major capsid protein">
    <location>
        <begin position="1"/>
        <end position="305"/>
    </location>
</feature>